<dbReference type="EC" id="7.1.1.-" evidence="1"/>
<dbReference type="EMBL" id="AE008917">
    <property type="protein sequence ID" value="AAL52331.1"/>
    <property type="molecule type" value="Genomic_DNA"/>
</dbReference>
<dbReference type="PIR" id="AH3395">
    <property type="entry name" value="AH3395"/>
</dbReference>
<dbReference type="RefSeq" id="WP_004683618.1">
    <property type="nucleotide sequence ID" value="NZ_GG703778.1"/>
</dbReference>
<dbReference type="SMR" id="Q8YGK8"/>
<dbReference type="GeneID" id="29593987"/>
<dbReference type="KEGG" id="bme:BMEI1150"/>
<dbReference type="KEGG" id="bmel:DK63_263"/>
<dbReference type="PATRIC" id="fig|224914.52.peg.272"/>
<dbReference type="eggNOG" id="COG1143">
    <property type="taxonomic scope" value="Bacteria"/>
</dbReference>
<dbReference type="PhylomeDB" id="Q8YGK8"/>
<dbReference type="Proteomes" id="UP000000419">
    <property type="component" value="Chromosome I"/>
</dbReference>
<dbReference type="GO" id="GO:0005886">
    <property type="term" value="C:plasma membrane"/>
    <property type="evidence" value="ECO:0007669"/>
    <property type="project" value="UniProtKB-SubCell"/>
</dbReference>
<dbReference type="GO" id="GO:0051539">
    <property type="term" value="F:4 iron, 4 sulfur cluster binding"/>
    <property type="evidence" value="ECO:0007669"/>
    <property type="project" value="UniProtKB-KW"/>
</dbReference>
<dbReference type="GO" id="GO:0005506">
    <property type="term" value="F:iron ion binding"/>
    <property type="evidence" value="ECO:0007669"/>
    <property type="project" value="UniProtKB-UniRule"/>
</dbReference>
<dbReference type="GO" id="GO:0050136">
    <property type="term" value="F:NADH:ubiquinone reductase (non-electrogenic) activity"/>
    <property type="evidence" value="ECO:0007669"/>
    <property type="project" value="UniProtKB-UniRule"/>
</dbReference>
<dbReference type="GO" id="GO:0048038">
    <property type="term" value="F:quinone binding"/>
    <property type="evidence" value="ECO:0007669"/>
    <property type="project" value="UniProtKB-KW"/>
</dbReference>
<dbReference type="GO" id="GO:0009060">
    <property type="term" value="P:aerobic respiration"/>
    <property type="evidence" value="ECO:0007669"/>
    <property type="project" value="TreeGrafter"/>
</dbReference>
<dbReference type="FunFam" id="3.30.70.3270:FF:000001">
    <property type="entry name" value="NADH-quinone oxidoreductase subunit I 1"/>
    <property type="match status" value="1"/>
</dbReference>
<dbReference type="Gene3D" id="3.30.70.3270">
    <property type="match status" value="1"/>
</dbReference>
<dbReference type="HAMAP" id="MF_01351">
    <property type="entry name" value="NDH1_NuoI"/>
    <property type="match status" value="1"/>
</dbReference>
<dbReference type="InterPro" id="IPR017896">
    <property type="entry name" value="4Fe4S_Fe-S-bd"/>
</dbReference>
<dbReference type="InterPro" id="IPR017900">
    <property type="entry name" value="4Fe4S_Fe_S_CS"/>
</dbReference>
<dbReference type="InterPro" id="IPR010226">
    <property type="entry name" value="NADH_quinone_OxRdtase_chainI"/>
</dbReference>
<dbReference type="NCBIfam" id="TIGR01971">
    <property type="entry name" value="NuoI"/>
    <property type="match status" value="1"/>
</dbReference>
<dbReference type="NCBIfam" id="NF004538">
    <property type="entry name" value="PRK05888.1-4"/>
    <property type="match status" value="1"/>
</dbReference>
<dbReference type="NCBIfam" id="NF004539">
    <property type="entry name" value="PRK05888.1-5"/>
    <property type="match status" value="1"/>
</dbReference>
<dbReference type="PANTHER" id="PTHR10849:SF20">
    <property type="entry name" value="NADH DEHYDROGENASE [UBIQUINONE] IRON-SULFUR PROTEIN 8, MITOCHONDRIAL"/>
    <property type="match status" value="1"/>
</dbReference>
<dbReference type="PANTHER" id="PTHR10849">
    <property type="entry name" value="NADH DEHYDROGENASE UBIQUINONE IRON-SULFUR PROTEIN 8, MITOCHONDRIAL"/>
    <property type="match status" value="1"/>
</dbReference>
<dbReference type="Pfam" id="PF12838">
    <property type="entry name" value="Fer4_7"/>
    <property type="match status" value="1"/>
</dbReference>
<dbReference type="SUPFAM" id="SSF54862">
    <property type="entry name" value="4Fe-4S ferredoxins"/>
    <property type="match status" value="1"/>
</dbReference>
<dbReference type="PROSITE" id="PS00198">
    <property type="entry name" value="4FE4S_FER_1"/>
    <property type="match status" value="2"/>
</dbReference>
<dbReference type="PROSITE" id="PS51379">
    <property type="entry name" value="4FE4S_FER_2"/>
    <property type="match status" value="2"/>
</dbReference>
<feature type="chain" id="PRO_0000250885" description="NADH-quinone oxidoreductase subunit I">
    <location>
        <begin position="1"/>
        <end position="163"/>
    </location>
</feature>
<feature type="domain" description="4Fe-4S ferredoxin-type 1" evidence="1">
    <location>
        <begin position="53"/>
        <end position="83"/>
    </location>
</feature>
<feature type="domain" description="4Fe-4S ferredoxin-type 2" evidence="1">
    <location>
        <begin position="94"/>
        <end position="123"/>
    </location>
</feature>
<feature type="binding site" evidence="1">
    <location>
        <position position="63"/>
    </location>
    <ligand>
        <name>[4Fe-4S] cluster</name>
        <dbReference type="ChEBI" id="CHEBI:49883"/>
        <label>1</label>
    </ligand>
</feature>
<feature type="binding site" evidence="1">
    <location>
        <position position="66"/>
    </location>
    <ligand>
        <name>[4Fe-4S] cluster</name>
        <dbReference type="ChEBI" id="CHEBI:49883"/>
        <label>1</label>
    </ligand>
</feature>
<feature type="binding site" evidence="1">
    <location>
        <position position="69"/>
    </location>
    <ligand>
        <name>[4Fe-4S] cluster</name>
        <dbReference type="ChEBI" id="CHEBI:49883"/>
        <label>1</label>
    </ligand>
</feature>
<feature type="binding site" evidence="1">
    <location>
        <position position="73"/>
    </location>
    <ligand>
        <name>[4Fe-4S] cluster</name>
        <dbReference type="ChEBI" id="CHEBI:49883"/>
        <label>2</label>
    </ligand>
</feature>
<feature type="binding site" evidence="1">
    <location>
        <position position="103"/>
    </location>
    <ligand>
        <name>[4Fe-4S] cluster</name>
        <dbReference type="ChEBI" id="CHEBI:49883"/>
        <label>2</label>
    </ligand>
</feature>
<feature type="binding site" evidence="1">
    <location>
        <position position="106"/>
    </location>
    <ligand>
        <name>[4Fe-4S] cluster</name>
        <dbReference type="ChEBI" id="CHEBI:49883"/>
        <label>2</label>
    </ligand>
</feature>
<feature type="binding site" evidence="1">
    <location>
        <position position="109"/>
    </location>
    <ligand>
        <name>[4Fe-4S] cluster</name>
        <dbReference type="ChEBI" id="CHEBI:49883"/>
        <label>2</label>
    </ligand>
</feature>
<feature type="binding site" evidence="1">
    <location>
        <position position="113"/>
    </location>
    <ligand>
        <name>[4Fe-4S] cluster</name>
        <dbReference type="ChEBI" id="CHEBI:49883"/>
        <label>1</label>
    </ligand>
</feature>
<protein>
    <recommendedName>
        <fullName evidence="1">NADH-quinone oxidoreductase subunit I</fullName>
        <ecNumber evidence="1">7.1.1.-</ecNumber>
    </recommendedName>
    <alternativeName>
        <fullName evidence="1">NADH dehydrogenase I subunit I</fullName>
    </alternativeName>
    <alternativeName>
        <fullName evidence="1">NDH-1 subunit I</fullName>
    </alternativeName>
</protein>
<proteinExistence type="inferred from homology"/>
<sequence length="163" mass="18500">MASIAQAAKSLLLKEFASAFALSMRQFFAPKATLNYPHEKGPVSPRFRGEHALRRYPNGEERCIACKLCEAICPAQAITIEAGPRRNDGTRRTVRYDIDMVKCIYCGFCQEACPVDAIVEGPNFEFATETREELYYDKDKLLANGDHWEREIARNIAMDAPYR</sequence>
<reference key="1">
    <citation type="journal article" date="2002" name="Proc. Natl. Acad. Sci. U.S.A.">
        <title>The genome sequence of the facultative intracellular pathogen Brucella melitensis.</title>
        <authorList>
            <person name="DelVecchio V.G."/>
            <person name="Kapatral V."/>
            <person name="Redkar R.J."/>
            <person name="Patra G."/>
            <person name="Mujer C."/>
            <person name="Los T."/>
            <person name="Ivanova N."/>
            <person name="Anderson I."/>
            <person name="Bhattacharyya A."/>
            <person name="Lykidis A."/>
            <person name="Reznik G."/>
            <person name="Jablonski L."/>
            <person name="Larsen N."/>
            <person name="D'Souza M."/>
            <person name="Bernal A."/>
            <person name="Mazur M."/>
            <person name="Goltsman E."/>
            <person name="Selkov E."/>
            <person name="Elzer P.H."/>
            <person name="Hagius S."/>
            <person name="O'Callaghan D."/>
            <person name="Letesson J.-J."/>
            <person name="Haselkorn R."/>
            <person name="Kyrpides N.C."/>
            <person name="Overbeek R."/>
        </authorList>
    </citation>
    <scope>NUCLEOTIDE SEQUENCE [LARGE SCALE GENOMIC DNA]</scope>
    <source>
        <strain>ATCC 23456 / CCUG 17765 / NCTC 10094 / 16M</strain>
    </source>
</reference>
<evidence type="ECO:0000255" key="1">
    <source>
        <dbReference type="HAMAP-Rule" id="MF_01351"/>
    </source>
</evidence>
<comment type="function">
    <text evidence="1">NDH-1 shuttles electrons from NADH, via FMN and iron-sulfur (Fe-S) centers, to quinones in the respiratory chain. The immediate electron acceptor for the enzyme in this species is believed to be ubiquinone. Couples the redox reaction to proton translocation (for every two electrons transferred, four hydrogen ions are translocated across the cytoplasmic membrane), and thus conserves the redox energy in a proton gradient.</text>
</comment>
<comment type="catalytic activity">
    <reaction evidence="1">
        <text>a quinone + NADH + 5 H(+)(in) = a quinol + NAD(+) + 4 H(+)(out)</text>
        <dbReference type="Rhea" id="RHEA:57888"/>
        <dbReference type="ChEBI" id="CHEBI:15378"/>
        <dbReference type="ChEBI" id="CHEBI:24646"/>
        <dbReference type="ChEBI" id="CHEBI:57540"/>
        <dbReference type="ChEBI" id="CHEBI:57945"/>
        <dbReference type="ChEBI" id="CHEBI:132124"/>
    </reaction>
</comment>
<comment type="cofactor">
    <cofactor evidence="1">
        <name>[4Fe-4S] cluster</name>
        <dbReference type="ChEBI" id="CHEBI:49883"/>
    </cofactor>
    <text evidence="1">Binds 2 [4Fe-4S] clusters per subunit.</text>
</comment>
<comment type="subunit">
    <text evidence="1">NDH-1 is composed of 14 different subunits. Subunits NuoA, H, J, K, L, M, N constitute the membrane sector of the complex.</text>
</comment>
<comment type="subcellular location">
    <subcellularLocation>
        <location evidence="1">Cell inner membrane</location>
        <topology evidence="1">Peripheral membrane protein</topology>
    </subcellularLocation>
</comment>
<comment type="similarity">
    <text evidence="1">Belongs to the complex I 23 kDa subunit family.</text>
</comment>
<gene>
    <name evidence="1" type="primary">nuoI</name>
    <name type="ordered locus">BMEI1150</name>
</gene>
<name>NUOI_BRUME</name>
<accession>Q8YGK8</accession>
<keyword id="KW-0004">4Fe-4S</keyword>
<keyword id="KW-0997">Cell inner membrane</keyword>
<keyword id="KW-1003">Cell membrane</keyword>
<keyword id="KW-0408">Iron</keyword>
<keyword id="KW-0411">Iron-sulfur</keyword>
<keyword id="KW-0472">Membrane</keyword>
<keyword id="KW-0479">Metal-binding</keyword>
<keyword id="KW-0520">NAD</keyword>
<keyword id="KW-0874">Quinone</keyword>
<keyword id="KW-0677">Repeat</keyword>
<keyword id="KW-1278">Translocase</keyword>
<keyword id="KW-0830">Ubiquinone</keyword>
<organism>
    <name type="scientific">Brucella melitensis biotype 1 (strain ATCC 23456 / CCUG 17765 / NCTC 10094 / 16M)</name>
    <dbReference type="NCBI Taxonomy" id="224914"/>
    <lineage>
        <taxon>Bacteria</taxon>
        <taxon>Pseudomonadati</taxon>
        <taxon>Pseudomonadota</taxon>
        <taxon>Alphaproteobacteria</taxon>
        <taxon>Hyphomicrobiales</taxon>
        <taxon>Brucellaceae</taxon>
        <taxon>Brucella/Ochrobactrum group</taxon>
        <taxon>Brucella</taxon>
    </lineage>
</organism>